<accession>D4D9R6</accession>
<gene>
    <name type="primary">NOP9</name>
    <name type="ORF">TRV_03859</name>
</gene>
<keyword id="KW-0539">Nucleus</keyword>
<keyword id="KW-0677">Repeat</keyword>
<keyword id="KW-0690">Ribosome biogenesis</keyword>
<keyword id="KW-0698">rRNA processing</keyword>
<sequence>MPREKKKRGRRAEKSQSKRKREDEEGSDSPKRQRTTNEDNDVQAGDDYIPLVTHDTEKEQEQGQEDDTPFYGLLDTEEQEYFSKASQTLELNSFEDDDDKRLFIESVYTEAKGKELKIACSQSCSRLMEKLIAMSTPDQVKALFEKFSGHFLHLVQHRFASHCCECLFIRAAPIVTSEMEKPKDKKKDRKQTTETNGEDGEQDEPMNQKPAMDLFLGVVSELEGNWGYLLTESFASHTIRVLLLILAGEPLADHSNARVLASRKKENVDSITSTAQAELTIRESRQVPAEFNSTLRKMISDLSAGLNSTYLQALATHPIGSPVLQVILSIELGCMGKEKVKDKSSVFRRLVPDDTLETKEEGVNFLNSLFYDPVGSRLLETIVRVAPGKFFKTFYKTIIRERIGSLARNEIASYVVIKVLERVSREDLQSAIESILPEIPSLVQRSRLNVIKTIIDRSTVRSADTTSLAKALESAYGEDGLVRLKTILGVEATDKDAESVKPKAATSAQHLHGSLLAQAMLQAPGRLATMIQTSFLAAPVEILIQIAKNSTASRALQEALKPSKSNTQFRRQLLPQFYGQMCDLSLDSSGSHVADALWDATSDLVFIKQRLAQELVDNESALRDSFLGRAVWRNWSMDLYKRKRGEWMSRAKGLDNPRVSAPTADSSAEPAKSKLDLARARYAARAEQQEKPDSREQGPRGKKQALSAPSGLLKAQ</sequence>
<name>NOP9_TRIVH</name>
<protein>
    <recommendedName>
        <fullName>Nucleolar protein 9</fullName>
    </recommendedName>
    <alternativeName>
        <fullName>Pumilio domain-containing protein NOP9</fullName>
    </alternativeName>
</protein>
<organism>
    <name type="scientific">Trichophyton verrucosum (strain HKI 0517)</name>
    <dbReference type="NCBI Taxonomy" id="663202"/>
    <lineage>
        <taxon>Eukaryota</taxon>
        <taxon>Fungi</taxon>
        <taxon>Dikarya</taxon>
        <taxon>Ascomycota</taxon>
        <taxon>Pezizomycotina</taxon>
        <taxon>Eurotiomycetes</taxon>
        <taxon>Eurotiomycetidae</taxon>
        <taxon>Onygenales</taxon>
        <taxon>Arthrodermataceae</taxon>
        <taxon>Trichophyton</taxon>
    </lineage>
</organism>
<dbReference type="EMBL" id="ACYE01000197">
    <property type="protein sequence ID" value="EFE41424.1"/>
    <property type="molecule type" value="Genomic_DNA"/>
</dbReference>
<dbReference type="RefSeq" id="XP_003022042.1">
    <property type="nucleotide sequence ID" value="XM_003021996.1"/>
</dbReference>
<dbReference type="SMR" id="D4D9R6"/>
<dbReference type="GeneID" id="9578926"/>
<dbReference type="KEGG" id="tve:TRV_03859"/>
<dbReference type="HOGENOM" id="CLU_008720_1_1_1"/>
<dbReference type="OrthoDB" id="4508at34384"/>
<dbReference type="Proteomes" id="UP000008383">
    <property type="component" value="Unassembled WGS sequence"/>
</dbReference>
<dbReference type="GO" id="GO:0030686">
    <property type="term" value="C:90S preribosome"/>
    <property type="evidence" value="ECO:0007669"/>
    <property type="project" value="TreeGrafter"/>
</dbReference>
<dbReference type="GO" id="GO:0005730">
    <property type="term" value="C:nucleolus"/>
    <property type="evidence" value="ECO:0007669"/>
    <property type="project" value="UniProtKB-SubCell"/>
</dbReference>
<dbReference type="GO" id="GO:0030688">
    <property type="term" value="C:preribosome, small subunit precursor"/>
    <property type="evidence" value="ECO:0007669"/>
    <property type="project" value="TreeGrafter"/>
</dbReference>
<dbReference type="GO" id="GO:0003723">
    <property type="term" value="F:RNA binding"/>
    <property type="evidence" value="ECO:0007669"/>
    <property type="project" value="InterPro"/>
</dbReference>
<dbReference type="GO" id="GO:0000480">
    <property type="term" value="P:endonucleolytic cleavage in 5'-ETS of tricistronic rRNA transcript (SSU-rRNA, 5.8S rRNA, LSU-rRNA)"/>
    <property type="evidence" value="ECO:0007669"/>
    <property type="project" value="TreeGrafter"/>
</dbReference>
<dbReference type="GO" id="GO:0000447">
    <property type="term" value="P:endonucleolytic cleavage in ITS1 to separate SSU-rRNA from 5.8S rRNA and LSU-rRNA from tricistronic rRNA transcript (SSU-rRNA, 5.8S rRNA, LSU-rRNA)"/>
    <property type="evidence" value="ECO:0007669"/>
    <property type="project" value="TreeGrafter"/>
</dbReference>
<dbReference type="GO" id="GO:0000472">
    <property type="term" value="P:endonucleolytic cleavage to generate mature 5'-end of SSU-rRNA from (SSU-rRNA, 5.8S rRNA, LSU-rRNA)"/>
    <property type="evidence" value="ECO:0007669"/>
    <property type="project" value="TreeGrafter"/>
</dbReference>
<dbReference type="GO" id="GO:0000056">
    <property type="term" value="P:ribosomal small subunit export from nucleus"/>
    <property type="evidence" value="ECO:0007669"/>
    <property type="project" value="TreeGrafter"/>
</dbReference>
<dbReference type="Gene3D" id="1.25.10.10">
    <property type="entry name" value="Leucine-rich Repeat Variant"/>
    <property type="match status" value="3"/>
</dbReference>
<dbReference type="InterPro" id="IPR011989">
    <property type="entry name" value="ARM-like"/>
</dbReference>
<dbReference type="InterPro" id="IPR016024">
    <property type="entry name" value="ARM-type_fold"/>
</dbReference>
<dbReference type="InterPro" id="IPR040000">
    <property type="entry name" value="NOP9"/>
</dbReference>
<dbReference type="InterPro" id="IPR001313">
    <property type="entry name" value="Pumilio_RNA-bd_rpt"/>
</dbReference>
<dbReference type="PANTHER" id="PTHR13102">
    <property type="entry name" value="NUCLEOLAR PROTEIN 9"/>
    <property type="match status" value="1"/>
</dbReference>
<dbReference type="PANTHER" id="PTHR13102:SF0">
    <property type="entry name" value="NUCLEOLAR PROTEIN 9"/>
    <property type="match status" value="1"/>
</dbReference>
<dbReference type="Pfam" id="PF22493">
    <property type="entry name" value="PUF_NOP9"/>
    <property type="match status" value="1"/>
</dbReference>
<dbReference type="SMART" id="SM00025">
    <property type="entry name" value="Pumilio"/>
    <property type="match status" value="6"/>
</dbReference>
<dbReference type="SUPFAM" id="SSF48371">
    <property type="entry name" value="ARM repeat"/>
    <property type="match status" value="2"/>
</dbReference>
<dbReference type="PROSITE" id="PS50302">
    <property type="entry name" value="PUM"/>
    <property type="match status" value="6"/>
</dbReference>
<reference key="1">
    <citation type="journal article" date="2011" name="Genome Biol.">
        <title>Comparative and functional genomics provide insights into the pathogenicity of dermatophytic fungi.</title>
        <authorList>
            <person name="Burmester A."/>
            <person name="Shelest E."/>
            <person name="Gloeckner G."/>
            <person name="Heddergott C."/>
            <person name="Schindler S."/>
            <person name="Staib P."/>
            <person name="Heidel A."/>
            <person name="Felder M."/>
            <person name="Petzold A."/>
            <person name="Szafranski K."/>
            <person name="Feuermann M."/>
            <person name="Pedruzzi I."/>
            <person name="Priebe S."/>
            <person name="Groth M."/>
            <person name="Winkler R."/>
            <person name="Li W."/>
            <person name="Kniemeyer O."/>
            <person name="Schroeckh V."/>
            <person name="Hertweck C."/>
            <person name="Hube B."/>
            <person name="White T.C."/>
            <person name="Platzer M."/>
            <person name="Guthke R."/>
            <person name="Heitman J."/>
            <person name="Woestemeyer J."/>
            <person name="Zipfel P.F."/>
            <person name="Monod M."/>
            <person name="Brakhage A.A."/>
        </authorList>
    </citation>
    <scope>NUCLEOTIDE SEQUENCE [LARGE SCALE GENOMIC DNA]</scope>
    <source>
        <strain>HKI 0517</strain>
    </source>
</reference>
<evidence type="ECO:0000250" key="1"/>
<evidence type="ECO:0000256" key="2">
    <source>
        <dbReference type="SAM" id="MobiDB-lite"/>
    </source>
</evidence>
<evidence type="ECO:0000305" key="3"/>
<proteinExistence type="inferred from homology"/>
<comment type="function">
    <text evidence="1">RNA-binding nucleolar protein required for pre-rRNA processing. Involved in production of 18S rRNA and assembly of small ribosomal subunit (By similarity).</text>
</comment>
<comment type="subcellular location">
    <subcellularLocation>
        <location evidence="1">Nucleus</location>
        <location evidence="1">Nucleolus</location>
    </subcellularLocation>
</comment>
<comment type="similarity">
    <text evidence="3">Belongs to the NOP9 family.</text>
</comment>
<feature type="chain" id="PRO_0000407835" description="Nucleolar protein 9">
    <location>
        <begin position="1"/>
        <end position="716"/>
    </location>
</feature>
<feature type="repeat" description="Pumilio 1">
    <location>
        <begin position="110"/>
        <end position="145"/>
    </location>
</feature>
<feature type="repeat" description="Pumilio 2">
    <location>
        <begin position="146"/>
        <end position="181"/>
    </location>
</feature>
<feature type="repeat" description="Pumilio 3">
    <location>
        <begin position="305"/>
        <end position="342"/>
    </location>
</feature>
<feature type="repeat" description="Pumilio 4">
    <location>
        <begin position="361"/>
        <end position="396"/>
    </location>
</feature>
<feature type="repeat" description="Pumilio 5">
    <location>
        <begin position="397"/>
        <end position="433"/>
    </location>
</feature>
<feature type="repeat" description="Pumilio 6">
    <location>
        <begin position="534"/>
        <end position="575"/>
    </location>
</feature>
<feature type="repeat" description="Pumilio 7">
    <location>
        <begin position="576"/>
        <end position="613"/>
    </location>
</feature>
<feature type="region of interest" description="Disordered" evidence="2">
    <location>
        <begin position="1"/>
        <end position="70"/>
    </location>
</feature>
<feature type="region of interest" description="Disordered" evidence="2">
    <location>
        <begin position="179"/>
        <end position="207"/>
    </location>
</feature>
<feature type="region of interest" description="Disordered" evidence="2">
    <location>
        <begin position="653"/>
        <end position="716"/>
    </location>
</feature>
<feature type="compositionally biased region" description="Basic residues" evidence="2">
    <location>
        <begin position="1"/>
        <end position="11"/>
    </location>
</feature>
<feature type="compositionally biased region" description="Basic and acidic residues" evidence="2">
    <location>
        <begin position="12"/>
        <end position="37"/>
    </location>
</feature>
<feature type="compositionally biased region" description="Basic and acidic residues" evidence="2">
    <location>
        <begin position="687"/>
        <end position="699"/>
    </location>
</feature>